<accession>A1VEK3</accession>
<reference key="1">
    <citation type="journal article" date="2009" name="Environ. Microbiol.">
        <title>Contribution of mobile genetic elements to Desulfovibrio vulgaris genome plasticity.</title>
        <authorList>
            <person name="Walker C.B."/>
            <person name="Stolyar S."/>
            <person name="Chivian D."/>
            <person name="Pinel N."/>
            <person name="Gabster J.A."/>
            <person name="Dehal P.S."/>
            <person name="He Z."/>
            <person name="Yang Z.K."/>
            <person name="Yen H.C."/>
            <person name="Zhou J."/>
            <person name="Wall J.D."/>
            <person name="Hazen T.C."/>
            <person name="Arkin A.P."/>
            <person name="Stahl D.A."/>
        </authorList>
    </citation>
    <scope>NUCLEOTIDE SEQUENCE [LARGE SCALE GENOMIC DNA]</scope>
    <source>
        <strain>DP4</strain>
    </source>
</reference>
<gene>
    <name evidence="1" type="primary">acpP</name>
    <name type="ordered locus">Dvul_1852</name>
</gene>
<proteinExistence type="inferred from homology"/>
<name>ACP_NITV4</name>
<comment type="function">
    <text evidence="1">Carrier of the growing fatty acid chain in fatty acid biosynthesis.</text>
</comment>
<comment type="pathway">
    <text evidence="1">Lipid metabolism; fatty acid biosynthesis.</text>
</comment>
<comment type="subcellular location">
    <subcellularLocation>
        <location evidence="1">Cytoplasm</location>
    </subcellularLocation>
</comment>
<comment type="PTM">
    <text evidence="1">4'-phosphopantetheine is transferred from CoA to a specific serine of apo-ACP by AcpS. This modification is essential for activity because fatty acids are bound in thioester linkage to the sulfhydryl of the prosthetic group.</text>
</comment>
<comment type="similarity">
    <text evidence="1">Belongs to the acyl carrier protein (ACP) family.</text>
</comment>
<evidence type="ECO:0000255" key="1">
    <source>
        <dbReference type="HAMAP-Rule" id="MF_01217"/>
    </source>
</evidence>
<evidence type="ECO:0000255" key="2">
    <source>
        <dbReference type="PROSITE-ProRule" id="PRU00258"/>
    </source>
</evidence>
<sequence>MSVEEKVKKIIMDQLGVSAEEVKPEASFVEDLGADSLDLTELIMAMEEEFGVEIDDDDAQKILKVKDAIDYVSNKQ</sequence>
<organism>
    <name type="scientific">Nitratidesulfovibrio vulgaris (strain DP4)</name>
    <name type="common">Desulfovibrio vulgaris</name>
    <dbReference type="NCBI Taxonomy" id="391774"/>
    <lineage>
        <taxon>Bacteria</taxon>
        <taxon>Pseudomonadati</taxon>
        <taxon>Thermodesulfobacteriota</taxon>
        <taxon>Desulfovibrionia</taxon>
        <taxon>Desulfovibrionales</taxon>
        <taxon>Desulfovibrionaceae</taxon>
        <taxon>Nitratidesulfovibrio</taxon>
    </lineage>
</organism>
<protein>
    <recommendedName>
        <fullName evidence="1">Acyl carrier protein</fullName>
        <shortName evidence="1">ACP</shortName>
    </recommendedName>
</protein>
<dbReference type="EMBL" id="CP000527">
    <property type="protein sequence ID" value="ABM28869.1"/>
    <property type="molecule type" value="Genomic_DNA"/>
</dbReference>
<dbReference type="RefSeq" id="WP_010938501.1">
    <property type="nucleotide sequence ID" value="NC_008751.1"/>
</dbReference>
<dbReference type="SMR" id="A1VEK3"/>
<dbReference type="KEGG" id="dvl:Dvul_1852"/>
<dbReference type="HOGENOM" id="CLU_108696_5_1_7"/>
<dbReference type="UniPathway" id="UPA00094"/>
<dbReference type="Proteomes" id="UP000009173">
    <property type="component" value="Chromosome"/>
</dbReference>
<dbReference type="GO" id="GO:0005829">
    <property type="term" value="C:cytosol"/>
    <property type="evidence" value="ECO:0007669"/>
    <property type="project" value="TreeGrafter"/>
</dbReference>
<dbReference type="GO" id="GO:0016020">
    <property type="term" value="C:membrane"/>
    <property type="evidence" value="ECO:0007669"/>
    <property type="project" value="GOC"/>
</dbReference>
<dbReference type="GO" id="GO:0000035">
    <property type="term" value="F:acyl binding"/>
    <property type="evidence" value="ECO:0007669"/>
    <property type="project" value="TreeGrafter"/>
</dbReference>
<dbReference type="GO" id="GO:0000036">
    <property type="term" value="F:acyl carrier activity"/>
    <property type="evidence" value="ECO:0007669"/>
    <property type="project" value="UniProtKB-UniRule"/>
</dbReference>
<dbReference type="GO" id="GO:0009245">
    <property type="term" value="P:lipid A biosynthetic process"/>
    <property type="evidence" value="ECO:0007669"/>
    <property type="project" value="TreeGrafter"/>
</dbReference>
<dbReference type="FunFam" id="1.10.1200.10:FF:000001">
    <property type="entry name" value="Acyl carrier protein"/>
    <property type="match status" value="1"/>
</dbReference>
<dbReference type="Gene3D" id="1.10.1200.10">
    <property type="entry name" value="ACP-like"/>
    <property type="match status" value="1"/>
</dbReference>
<dbReference type="HAMAP" id="MF_01217">
    <property type="entry name" value="Acyl_carrier"/>
    <property type="match status" value="1"/>
</dbReference>
<dbReference type="InterPro" id="IPR003231">
    <property type="entry name" value="ACP"/>
</dbReference>
<dbReference type="InterPro" id="IPR036736">
    <property type="entry name" value="ACP-like_sf"/>
</dbReference>
<dbReference type="InterPro" id="IPR009081">
    <property type="entry name" value="PP-bd_ACP"/>
</dbReference>
<dbReference type="InterPro" id="IPR006162">
    <property type="entry name" value="Ppantetheine_attach_site"/>
</dbReference>
<dbReference type="NCBIfam" id="TIGR00517">
    <property type="entry name" value="acyl_carrier"/>
    <property type="match status" value="1"/>
</dbReference>
<dbReference type="NCBIfam" id="NF002148">
    <property type="entry name" value="PRK00982.1-2"/>
    <property type="match status" value="1"/>
</dbReference>
<dbReference type="NCBIfam" id="NF002149">
    <property type="entry name" value="PRK00982.1-3"/>
    <property type="match status" value="1"/>
</dbReference>
<dbReference type="NCBIfam" id="NF002150">
    <property type="entry name" value="PRK00982.1-4"/>
    <property type="match status" value="1"/>
</dbReference>
<dbReference type="NCBIfam" id="NF002151">
    <property type="entry name" value="PRK00982.1-5"/>
    <property type="match status" value="1"/>
</dbReference>
<dbReference type="PANTHER" id="PTHR20863">
    <property type="entry name" value="ACYL CARRIER PROTEIN"/>
    <property type="match status" value="1"/>
</dbReference>
<dbReference type="PANTHER" id="PTHR20863:SF76">
    <property type="entry name" value="CARRIER DOMAIN-CONTAINING PROTEIN"/>
    <property type="match status" value="1"/>
</dbReference>
<dbReference type="Pfam" id="PF00550">
    <property type="entry name" value="PP-binding"/>
    <property type="match status" value="1"/>
</dbReference>
<dbReference type="SUPFAM" id="SSF47336">
    <property type="entry name" value="ACP-like"/>
    <property type="match status" value="1"/>
</dbReference>
<dbReference type="PROSITE" id="PS50075">
    <property type="entry name" value="CARRIER"/>
    <property type="match status" value="1"/>
</dbReference>
<dbReference type="PROSITE" id="PS00012">
    <property type="entry name" value="PHOSPHOPANTETHEINE"/>
    <property type="match status" value="1"/>
</dbReference>
<keyword id="KW-0963">Cytoplasm</keyword>
<keyword id="KW-0275">Fatty acid biosynthesis</keyword>
<keyword id="KW-0276">Fatty acid metabolism</keyword>
<keyword id="KW-0444">Lipid biosynthesis</keyword>
<keyword id="KW-0443">Lipid metabolism</keyword>
<keyword id="KW-0596">Phosphopantetheine</keyword>
<keyword id="KW-0597">Phosphoprotein</keyword>
<feature type="chain" id="PRO_1000066603" description="Acyl carrier protein">
    <location>
        <begin position="1"/>
        <end position="76"/>
    </location>
</feature>
<feature type="domain" description="Carrier" evidence="2">
    <location>
        <begin position="1"/>
        <end position="76"/>
    </location>
</feature>
<feature type="modified residue" description="O-(pantetheine 4'-phosphoryl)serine" evidence="2">
    <location>
        <position position="36"/>
    </location>
</feature>